<protein>
    <recommendedName>
        <fullName evidence="1">Large ribosomal subunit protein bL34</fullName>
    </recommendedName>
    <alternativeName>
        <fullName evidence="3">50S ribosomal protein L34</fullName>
    </alternativeName>
</protein>
<dbReference type="EMBL" id="CP001019">
    <property type="protein sequence ID" value="ACJ17485.1"/>
    <property type="molecule type" value="Genomic_DNA"/>
</dbReference>
<dbReference type="RefSeq" id="WP_010958535.1">
    <property type="nucleotide sequence ID" value="NC_011527.1"/>
</dbReference>
<dbReference type="SMR" id="B6J2B1"/>
<dbReference type="KEGG" id="cbg:CbuG_0026"/>
<dbReference type="HOGENOM" id="CLU_129938_2_0_6"/>
<dbReference type="GO" id="GO:1990904">
    <property type="term" value="C:ribonucleoprotein complex"/>
    <property type="evidence" value="ECO:0007669"/>
    <property type="project" value="UniProtKB-KW"/>
</dbReference>
<dbReference type="GO" id="GO:0005840">
    <property type="term" value="C:ribosome"/>
    <property type="evidence" value="ECO:0007669"/>
    <property type="project" value="UniProtKB-KW"/>
</dbReference>
<dbReference type="GO" id="GO:0003735">
    <property type="term" value="F:structural constituent of ribosome"/>
    <property type="evidence" value="ECO:0007669"/>
    <property type="project" value="InterPro"/>
</dbReference>
<dbReference type="GO" id="GO:0006412">
    <property type="term" value="P:translation"/>
    <property type="evidence" value="ECO:0007669"/>
    <property type="project" value="UniProtKB-UniRule"/>
</dbReference>
<dbReference type="FunFam" id="1.10.287.3980:FF:000001">
    <property type="entry name" value="Mitochondrial ribosomal protein L34"/>
    <property type="match status" value="1"/>
</dbReference>
<dbReference type="Gene3D" id="1.10.287.3980">
    <property type="match status" value="1"/>
</dbReference>
<dbReference type="HAMAP" id="MF_00391">
    <property type="entry name" value="Ribosomal_bL34"/>
    <property type="match status" value="1"/>
</dbReference>
<dbReference type="InterPro" id="IPR000271">
    <property type="entry name" value="Ribosomal_bL34"/>
</dbReference>
<dbReference type="InterPro" id="IPR020939">
    <property type="entry name" value="Ribosomal_bL34_CS"/>
</dbReference>
<dbReference type="NCBIfam" id="TIGR01030">
    <property type="entry name" value="rpmH_bact"/>
    <property type="match status" value="1"/>
</dbReference>
<dbReference type="PANTHER" id="PTHR14503:SF4">
    <property type="entry name" value="LARGE RIBOSOMAL SUBUNIT PROTEIN BL34M"/>
    <property type="match status" value="1"/>
</dbReference>
<dbReference type="PANTHER" id="PTHR14503">
    <property type="entry name" value="MITOCHONDRIAL RIBOSOMAL PROTEIN 34 FAMILY MEMBER"/>
    <property type="match status" value="1"/>
</dbReference>
<dbReference type="Pfam" id="PF00468">
    <property type="entry name" value="Ribosomal_L34"/>
    <property type="match status" value="1"/>
</dbReference>
<dbReference type="PROSITE" id="PS00784">
    <property type="entry name" value="RIBOSOMAL_L34"/>
    <property type="match status" value="1"/>
</dbReference>
<keyword id="KW-0687">Ribonucleoprotein</keyword>
<keyword id="KW-0689">Ribosomal protein</keyword>
<organism>
    <name type="scientific">Coxiella burnetii (strain CbuG_Q212)</name>
    <name type="common">Coxiella burnetii (strain Q212)</name>
    <dbReference type="NCBI Taxonomy" id="434923"/>
    <lineage>
        <taxon>Bacteria</taxon>
        <taxon>Pseudomonadati</taxon>
        <taxon>Pseudomonadota</taxon>
        <taxon>Gammaproteobacteria</taxon>
        <taxon>Legionellales</taxon>
        <taxon>Coxiellaceae</taxon>
        <taxon>Coxiella</taxon>
    </lineage>
</organism>
<feature type="chain" id="PRO_1000196029" description="Large ribosomal subunit protein bL34">
    <location>
        <begin position="1"/>
        <end position="44"/>
    </location>
</feature>
<feature type="region of interest" description="Disordered" evidence="2">
    <location>
        <begin position="1"/>
        <end position="44"/>
    </location>
</feature>
<feature type="compositionally biased region" description="Basic residues" evidence="2">
    <location>
        <begin position="1"/>
        <end position="19"/>
    </location>
</feature>
<feature type="compositionally biased region" description="Basic residues" evidence="2">
    <location>
        <begin position="31"/>
        <end position="44"/>
    </location>
</feature>
<comment type="similarity">
    <text evidence="1">Belongs to the bacterial ribosomal protein bL34 family.</text>
</comment>
<accession>B6J2B1</accession>
<reference key="1">
    <citation type="journal article" date="2009" name="Infect. Immun.">
        <title>Comparative genomics reveal extensive transposon-mediated genomic plasticity and diversity among potential effector proteins within the genus Coxiella.</title>
        <authorList>
            <person name="Beare P.A."/>
            <person name="Unsworth N."/>
            <person name="Andoh M."/>
            <person name="Voth D.E."/>
            <person name="Omsland A."/>
            <person name="Gilk S.D."/>
            <person name="Williams K.P."/>
            <person name="Sobral B.W."/>
            <person name="Kupko J.J. III"/>
            <person name="Porcella S.F."/>
            <person name="Samuel J.E."/>
            <person name="Heinzen R.A."/>
        </authorList>
    </citation>
    <scope>NUCLEOTIDE SEQUENCE [LARGE SCALE GENOMIC DNA]</scope>
    <source>
        <strain>CbuG_Q212</strain>
    </source>
</reference>
<proteinExistence type="inferred from homology"/>
<name>RL34_COXB2</name>
<sequence length="44" mass="5339">MKRTYQPSKQKRNRTHGFRARMATKNGRQVLNRRRAKGRKRLTV</sequence>
<evidence type="ECO:0000255" key="1">
    <source>
        <dbReference type="HAMAP-Rule" id="MF_00391"/>
    </source>
</evidence>
<evidence type="ECO:0000256" key="2">
    <source>
        <dbReference type="SAM" id="MobiDB-lite"/>
    </source>
</evidence>
<evidence type="ECO:0000305" key="3"/>
<gene>
    <name evidence="1" type="primary">rpmH</name>
    <name type="ordered locus">CbuG_0026</name>
</gene>